<name>LACB_STRPG</name>
<comment type="catalytic activity">
    <reaction evidence="1">
        <text>aldehydo-D-galactose 6-phosphate = keto-D-tagatose 6-phosphate</text>
        <dbReference type="Rhea" id="RHEA:13033"/>
        <dbReference type="ChEBI" id="CHEBI:58255"/>
        <dbReference type="ChEBI" id="CHEBI:134283"/>
        <dbReference type="EC" id="5.3.1.26"/>
    </reaction>
</comment>
<comment type="pathway">
    <text evidence="1">Carbohydrate metabolism; D-galactose 6-phosphate degradation; D-tagatose 6-phosphate from D-galactose 6-phosphate: step 1/1.</text>
</comment>
<comment type="subunit">
    <text evidence="1">Heteromultimeric protein consisting of LacA and LacB.</text>
</comment>
<comment type="similarity">
    <text evidence="1">Belongs to the LacAB/RpiB family.</text>
</comment>
<gene>
    <name evidence="1" type="primary">lacB</name>
    <name type="ordered locus">SpyM50393</name>
</gene>
<accession>A2RD12</accession>
<evidence type="ECO:0000255" key="1">
    <source>
        <dbReference type="HAMAP-Rule" id="MF_01556"/>
    </source>
</evidence>
<protein>
    <recommendedName>
        <fullName evidence="1">Galactose-6-phosphate isomerase subunit LacB</fullName>
        <ecNumber evidence="1">5.3.1.26</ecNumber>
    </recommendedName>
</protein>
<organism>
    <name type="scientific">Streptococcus pyogenes serotype M5 (strain Manfredo)</name>
    <dbReference type="NCBI Taxonomy" id="160491"/>
    <lineage>
        <taxon>Bacteria</taxon>
        <taxon>Bacillati</taxon>
        <taxon>Bacillota</taxon>
        <taxon>Bacilli</taxon>
        <taxon>Lactobacillales</taxon>
        <taxon>Streptococcaceae</taxon>
        <taxon>Streptococcus</taxon>
    </lineage>
</organism>
<feature type="chain" id="PRO_1000068931" description="Galactose-6-phosphate isomerase subunit LacB">
    <location>
        <begin position="1"/>
        <end position="171"/>
    </location>
</feature>
<sequence>MKIAIGCDHIVTNEKMAVSDFLKSKGYDVIDCGTYDHTRTHYPIFGKKVGEAVVNGQADLGVCICGTGVGINNAVNKVPGIRSALVRDMTTALYAKEELNANVIGFGGKITGELLMCDIIDAFIKAEYKETEENKKLIAKIAHLETHHANQEDPDFFTEFLEKWDRGEYHD</sequence>
<dbReference type="EC" id="5.3.1.26" evidence="1"/>
<dbReference type="EMBL" id="AM295007">
    <property type="protein sequence ID" value="CAM29736.1"/>
    <property type="molecule type" value="Genomic_DNA"/>
</dbReference>
<dbReference type="RefSeq" id="WP_002994294.1">
    <property type="nucleotide sequence ID" value="NC_009332.1"/>
</dbReference>
<dbReference type="SMR" id="A2RD12"/>
<dbReference type="KEGG" id="spf:SpyM50393"/>
<dbReference type="HOGENOM" id="CLU_091396_2_0_9"/>
<dbReference type="UniPathway" id="UPA00702">
    <property type="reaction ID" value="UER00714"/>
</dbReference>
<dbReference type="GO" id="GO:0050044">
    <property type="term" value="F:galactose-6-phosphate isomerase activity"/>
    <property type="evidence" value="ECO:0007669"/>
    <property type="project" value="UniProtKB-UniRule"/>
</dbReference>
<dbReference type="GO" id="GO:0004751">
    <property type="term" value="F:ribose-5-phosphate isomerase activity"/>
    <property type="evidence" value="ECO:0007669"/>
    <property type="project" value="TreeGrafter"/>
</dbReference>
<dbReference type="GO" id="GO:0019316">
    <property type="term" value="P:D-allose catabolic process"/>
    <property type="evidence" value="ECO:0007669"/>
    <property type="project" value="TreeGrafter"/>
</dbReference>
<dbReference type="GO" id="GO:0019388">
    <property type="term" value="P:galactose catabolic process"/>
    <property type="evidence" value="ECO:0007669"/>
    <property type="project" value="UniProtKB-UniPathway"/>
</dbReference>
<dbReference type="GO" id="GO:0019512">
    <property type="term" value="P:lactose catabolic process via tagatose-6-phosphate"/>
    <property type="evidence" value="ECO:0007669"/>
    <property type="project" value="UniProtKB-UniRule"/>
</dbReference>
<dbReference type="GO" id="GO:0009052">
    <property type="term" value="P:pentose-phosphate shunt, non-oxidative branch"/>
    <property type="evidence" value="ECO:0007669"/>
    <property type="project" value="TreeGrafter"/>
</dbReference>
<dbReference type="Gene3D" id="3.40.1400.10">
    <property type="entry name" value="Sugar-phosphate isomerase, RpiB/LacA/LacB"/>
    <property type="match status" value="1"/>
</dbReference>
<dbReference type="HAMAP" id="MF_01556">
    <property type="entry name" value="LacB"/>
    <property type="match status" value="1"/>
</dbReference>
<dbReference type="InterPro" id="IPR004784">
    <property type="entry name" value="LacB"/>
</dbReference>
<dbReference type="InterPro" id="IPR003500">
    <property type="entry name" value="RpiB_LacA_LacB"/>
</dbReference>
<dbReference type="InterPro" id="IPR036569">
    <property type="entry name" value="RpiB_LacA_LacB_sf"/>
</dbReference>
<dbReference type="NCBIfam" id="TIGR01119">
    <property type="entry name" value="lacB"/>
    <property type="match status" value="1"/>
</dbReference>
<dbReference type="NCBIfam" id="NF004051">
    <property type="entry name" value="PRK05571.1"/>
    <property type="match status" value="1"/>
</dbReference>
<dbReference type="NCBIfam" id="NF006381">
    <property type="entry name" value="PRK08622.1"/>
    <property type="match status" value="1"/>
</dbReference>
<dbReference type="NCBIfam" id="NF009258">
    <property type="entry name" value="PRK12615.1"/>
    <property type="match status" value="1"/>
</dbReference>
<dbReference type="NCBIfam" id="TIGR00689">
    <property type="entry name" value="rpiB_lacA_lacB"/>
    <property type="match status" value="1"/>
</dbReference>
<dbReference type="PANTHER" id="PTHR30345:SF0">
    <property type="entry name" value="DNA DAMAGE-REPAIR_TOLERATION PROTEIN DRT102"/>
    <property type="match status" value="1"/>
</dbReference>
<dbReference type="PANTHER" id="PTHR30345">
    <property type="entry name" value="RIBOSE-5-PHOSPHATE ISOMERASE B"/>
    <property type="match status" value="1"/>
</dbReference>
<dbReference type="Pfam" id="PF02502">
    <property type="entry name" value="LacAB_rpiB"/>
    <property type="match status" value="1"/>
</dbReference>
<dbReference type="PIRSF" id="PIRSF005384">
    <property type="entry name" value="RpiB_LacA_B"/>
    <property type="match status" value="1"/>
</dbReference>
<dbReference type="SUPFAM" id="SSF89623">
    <property type="entry name" value="Ribose/Galactose isomerase RpiB/AlsB"/>
    <property type="match status" value="1"/>
</dbReference>
<reference key="1">
    <citation type="journal article" date="2007" name="J. Bacteriol.">
        <title>Complete genome of acute rheumatic fever-associated serotype M5 Streptococcus pyogenes strain Manfredo.</title>
        <authorList>
            <person name="Holden M.T.G."/>
            <person name="Scott A."/>
            <person name="Cherevach I."/>
            <person name="Chillingworth T."/>
            <person name="Churcher C."/>
            <person name="Cronin A."/>
            <person name="Dowd L."/>
            <person name="Feltwell T."/>
            <person name="Hamlin N."/>
            <person name="Holroyd S."/>
            <person name="Jagels K."/>
            <person name="Moule S."/>
            <person name="Mungall K."/>
            <person name="Quail M.A."/>
            <person name="Price C."/>
            <person name="Rabbinowitsch E."/>
            <person name="Sharp S."/>
            <person name="Skelton J."/>
            <person name="Whitehead S."/>
            <person name="Barrell B.G."/>
            <person name="Kehoe M."/>
            <person name="Parkhill J."/>
        </authorList>
    </citation>
    <scope>NUCLEOTIDE SEQUENCE [LARGE SCALE GENOMIC DNA]</scope>
    <source>
        <strain>Manfredo</strain>
    </source>
</reference>
<proteinExistence type="inferred from homology"/>
<keyword id="KW-0413">Isomerase</keyword>
<keyword id="KW-0423">Lactose metabolism</keyword>